<evidence type="ECO:0000305" key="1"/>
<gene>
    <name type="primary">rps28</name>
    <name type="ORF">DDB_G0285597</name>
</gene>
<sequence length="72" mass="8054">MNTAATETVQLAKVTEVLCRTGSRGAVTQVRVEFLGTAQGKERTLLRNVKGPVRKDDILCLLETEREARRLR</sequence>
<comment type="similarity">
    <text evidence="1">Belongs to the eukaryotic ribosomal protein eS28 family.</text>
</comment>
<reference key="1">
    <citation type="journal article" date="2005" name="Nature">
        <title>The genome of the social amoeba Dictyostelium discoideum.</title>
        <authorList>
            <person name="Eichinger L."/>
            <person name="Pachebat J.A."/>
            <person name="Gloeckner G."/>
            <person name="Rajandream M.A."/>
            <person name="Sucgang R."/>
            <person name="Berriman M."/>
            <person name="Song J."/>
            <person name="Olsen R."/>
            <person name="Szafranski K."/>
            <person name="Xu Q."/>
            <person name="Tunggal B."/>
            <person name="Kummerfeld S."/>
            <person name="Madera M."/>
            <person name="Konfortov B.A."/>
            <person name="Rivero F."/>
            <person name="Bankier A.T."/>
            <person name="Lehmann R."/>
            <person name="Hamlin N."/>
            <person name="Davies R."/>
            <person name="Gaudet P."/>
            <person name="Fey P."/>
            <person name="Pilcher K."/>
            <person name="Chen G."/>
            <person name="Saunders D."/>
            <person name="Sodergren E.J."/>
            <person name="Davis P."/>
            <person name="Kerhornou A."/>
            <person name="Nie X."/>
            <person name="Hall N."/>
            <person name="Anjard C."/>
            <person name="Hemphill L."/>
            <person name="Bason N."/>
            <person name="Farbrother P."/>
            <person name="Desany B."/>
            <person name="Just E."/>
            <person name="Morio T."/>
            <person name="Rost R."/>
            <person name="Churcher C.M."/>
            <person name="Cooper J."/>
            <person name="Haydock S."/>
            <person name="van Driessche N."/>
            <person name="Cronin A."/>
            <person name="Goodhead I."/>
            <person name="Muzny D.M."/>
            <person name="Mourier T."/>
            <person name="Pain A."/>
            <person name="Lu M."/>
            <person name="Harper D."/>
            <person name="Lindsay R."/>
            <person name="Hauser H."/>
            <person name="James K.D."/>
            <person name="Quiles M."/>
            <person name="Madan Babu M."/>
            <person name="Saito T."/>
            <person name="Buchrieser C."/>
            <person name="Wardroper A."/>
            <person name="Felder M."/>
            <person name="Thangavelu M."/>
            <person name="Johnson D."/>
            <person name="Knights A."/>
            <person name="Loulseged H."/>
            <person name="Mungall K.L."/>
            <person name="Oliver K."/>
            <person name="Price C."/>
            <person name="Quail M.A."/>
            <person name="Urushihara H."/>
            <person name="Hernandez J."/>
            <person name="Rabbinowitsch E."/>
            <person name="Steffen D."/>
            <person name="Sanders M."/>
            <person name="Ma J."/>
            <person name="Kohara Y."/>
            <person name="Sharp S."/>
            <person name="Simmonds M.N."/>
            <person name="Spiegler S."/>
            <person name="Tivey A."/>
            <person name="Sugano S."/>
            <person name="White B."/>
            <person name="Walker D."/>
            <person name="Woodward J.R."/>
            <person name="Winckler T."/>
            <person name="Tanaka Y."/>
            <person name="Shaulsky G."/>
            <person name="Schleicher M."/>
            <person name="Weinstock G.M."/>
            <person name="Rosenthal A."/>
            <person name="Cox E.C."/>
            <person name="Chisholm R.L."/>
            <person name="Gibbs R.A."/>
            <person name="Loomis W.F."/>
            <person name="Platzer M."/>
            <person name="Kay R.R."/>
            <person name="Williams J.G."/>
            <person name="Dear P.H."/>
            <person name="Noegel A.A."/>
            <person name="Barrell B.G."/>
            <person name="Kuspa A."/>
        </authorList>
    </citation>
    <scope>NUCLEOTIDE SEQUENCE [LARGE SCALE GENOMIC DNA]</scope>
    <source>
        <strain>AX4</strain>
    </source>
</reference>
<organism>
    <name type="scientific">Dictyostelium discoideum</name>
    <name type="common">Social amoeba</name>
    <dbReference type="NCBI Taxonomy" id="44689"/>
    <lineage>
        <taxon>Eukaryota</taxon>
        <taxon>Amoebozoa</taxon>
        <taxon>Evosea</taxon>
        <taxon>Eumycetozoa</taxon>
        <taxon>Dictyostelia</taxon>
        <taxon>Dictyosteliales</taxon>
        <taxon>Dictyosteliaceae</taxon>
        <taxon>Dictyostelium</taxon>
    </lineage>
</organism>
<proteinExistence type="inferred from homology"/>
<protein>
    <recommendedName>
        <fullName evidence="1">Small ribosomal subunit protein eS28</fullName>
    </recommendedName>
    <alternativeName>
        <fullName>40S ribosomal protein S28</fullName>
    </alternativeName>
</protein>
<keyword id="KW-1185">Reference proteome</keyword>
<keyword id="KW-0687">Ribonucleoprotein</keyword>
<keyword id="KW-0689">Ribosomal protein</keyword>
<name>RS28_DICDI</name>
<feature type="chain" id="PRO_0000325087" description="Small ribosomal subunit protein eS28">
    <location>
        <begin position="1"/>
        <end position="72"/>
    </location>
</feature>
<accession>Q54MZ5</accession>
<dbReference type="EMBL" id="AAFI02000079">
    <property type="protein sequence ID" value="EAL64636.1"/>
    <property type="molecule type" value="Genomic_DNA"/>
</dbReference>
<dbReference type="RefSeq" id="XP_638148.1">
    <property type="nucleotide sequence ID" value="XM_633056.1"/>
</dbReference>
<dbReference type="SMR" id="Q54MZ5"/>
<dbReference type="FunCoup" id="Q54MZ5">
    <property type="interactions" value="462"/>
</dbReference>
<dbReference type="STRING" id="44689.Q54MZ5"/>
<dbReference type="PaxDb" id="44689-DDB0231067"/>
<dbReference type="EnsemblProtists" id="EAL64636">
    <property type="protein sequence ID" value="EAL64636"/>
    <property type="gene ID" value="DDB_G0285597"/>
</dbReference>
<dbReference type="GeneID" id="8625196"/>
<dbReference type="KEGG" id="ddi:DDB_G0285597"/>
<dbReference type="dictyBase" id="DDB_G0285597">
    <property type="gene designation" value="rps28"/>
</dbReference>
<dbReference type="VEuPathDB" id="AmoebaDB:DDB_G0285597"/>
<dbReference type="eggNOG" id="KOG3502">
    <property type="taxonomic scope" value="Eukaryota"/>
</dbReference>
<dbReference type="HOGENOM" id="CLU_178987_1_0_1"/>
<dbReference type="InParanoid" id="Q54MZ5"/>
<dbReference type="OMA" id="NTGMHGE"/>
<dbReference type="PhylomeDB" id="Q54MZ5"/>
<dbReference type="Reactome" id="R-DDI-156827">
    <property type="pathway name" value="L13a-mediated translational silencing of Ceruloplasmin expression"/>
</dbReference>
<dbReference type="Reactome" id="R-DDI-1799339">
    <property type="pathway name" value="SRP-dependent cotranslational protein targeting to membrane"/>
</dbReference>
<dbReference type="Reactome" id="R-DDI-72689">
    <property type="pathway name" value="Formation of a pool of free 40S subunits"/>
</dbReference>
<dbReference type="Reactome" id="R-DDI-72695">
    <property type="pathway name" value="Formation of the ternary complex, and subsequently, the 43S complex"/>
</dbReference>
<dbReference type="Reactome" id="R-DDI-72702">
    <property type="pathway name" value="Ribosomal scanning and start codon recognition"/>
</dbReference>
<dbReference type="Reactome" id="R-DDI-72706">
    <property type="pathway name" value="GTP hydrolysis and joining of the 60S ribosomal subunit"/>
</dbReference>
<dbReference type="Reactome" id="R-DDI-975956">
    <property type="pathway name" value="Nonsense Mediated Decay (NMD) independent of the Exon Junction Complex (EJC)"/>
</dbReference>
<dbReference type="Reactome" id="R-DDI-975957">
    <property type="pathway name" value="Nonsense Mediated Decay (NMD) enhanced by the Exon Junction Complex (EJC)"/>
</dbReference>
<dbReference type="PRO" id="PR:Q54MZ5"/>
<dbReference type="Proteomes" id="UP000002195">
    <property type="component" value="Chromosome 4"/>
</dbReference>
<dbReference type="GO" id="GO:0022627">
    <property type="term" value="C:cytosolic small ribosomal subunit"/>
    <property type="evidence" value="ECO:0000318"/>
    <property type="project" value="GO_Central"/>
</dbReference>
<dbReference type="GO" id="GO:0003735">
    <property type="term" value="F:structural constituent of ribosome"/>
    <property type="evidence" value="ECO:0000318"/>
    <property type="project" value="GO_Central"/>
</dbReference>
<dbReference type="GO" id="GO:0030490">
    <property type="term" value="P:maturation of SSU-rRNA"/>
    <property type="evidence" value="ECO:0000318"/>
    <property type="project" value="GO_Central"/>
</dbReference>
<dbReference type="GO" id="GO:0000028">
    <property type="term" value="P:ribosomal small subunit assembly"/>
    <property type="evidence" value="ECO:0000318"/>
    <property type="project" value="GO_Central"/>
</dbReference>
<dbReference type="GO" id="GO:0006412">
    <property type="term" value="P:translation"/>
    <property type="evidence" value="ECO:0007669"/>
    <property type="project" value="InterPro"/>
</dbReference>
<dbReference type="CDD" id="cd04457">
    <property type="entry name" value="S1_S28E"/>
    <property type="match status" value="1"/>
</dbReference>
<dbReference type="FunFam" id="2.40.50.140:FF:000180">
    <property type="entry name" value="40S ribosomal protein S28e"/>
    <property type="match status" value="1"/>
</dbReference>
<dbReference type="Gene3D" id="2.40.50.140">
    <property type="entry name" value="Nucleic acid-binding proteins"/>
    <property type="match status" value="1"/>
</dbReference>
<dbReference type="HAMAP" id="MF_00292">
    <property type="entry name" value="Ribosomal_eS28"/>
    <property type="match status" value="1"/>
</dbReference>
<dbReference type="InterPro" id="IPR012340">
    <property type="entry name" value="NA-bd_OB-fold"/>
</dbReference>
<dbReference type="InterPro" id="IPR000289">
    <property type="entry name" value="Ribosomal_eS28"/>
</dbReference>
<dbReference type="InterPro" id="IPR028626">
    <property type="entry name" value="Ribosomal_eS28_CS"/>
</dbReference>
<dbReference type="PANTHER" id="PTHR10769">
    <property type="entry name" value="40S RIBOSOMAL PROTEIN S28"/>
    <property type="match status" value="1"/>
</dbReference>
<dbReference type="PANTHER" id="PTHR10769:SF3">
    <property type="entry name" value="SMALL RIBOSOMAL SUBUNIT PROTEIN ES28"/>
    <property type="match status" value="1"/>
</dbReference>
<dbReference type="Pfam" id="PF01200">
    <property type="entry name" value="Ribosomal_S28e"/>
    <property type="match status" value="1"/>
</dbReference>
<dbReference type="SUPFAM" id="SSF50249">
    <property type="entry name" value="Nucleic acid-binding proteins"/>
    <property type="match status" value="1"/>
</dbReference>
<dbReference type="PROSITE" id="PS00961">
    <property type="entry name" value="RIBOSOMAL_S28E"/>
    <property type="match status" value="1"/>
</dbReference>